<name>EX7S_DESHY</name>
<dbReference type="EC" id="3.1.11.6" evidence="1"/>
<dbReference type="EMBL" id="AP008230">
    <property type="protein sequence ID" value="BAE84141.1"/>
    <property type="molecule type" value="Genomic_DNA"/>
</dbReference>
<dbReference type="SMR" id="Q24V01"/>
<dbReference type="STRING" id="138119.DSY2352"/>
<dbReference type="KEGG" id="dsy:DSY2352"/>
<dbReference type="eggNOG" id="COG1722">
    <property type="taxonomic scope" value="Bacteria"/>
</dbReference>
<dbReference type="HOGENOM" id="CLU_145918_3_4_9"/>
<dbReference type="Proteomes" id="UP000001946">
    <property type="component" value="Chromosome"/>
</dbReference>
<dbReference type="GO" id="GO:0005829">
    <property type="term" value="C:cytosol"/>
    <property type="evidence" value="ECO:0007669"/>
    <property type="project" value="TreeGrafter"/>
</dbReference>
<dbReference type="GO" id="GO:0009318">
    <property type="term" value="C:exodeoxyribonuclease VII complex"/>
    <property type="evidence" value="ECO:0007669"/>
    <property type="project" value="InterPro"/>
</dbReference>
<dbReference type="GO" id="GO:0008855">
    <property type="term" value="F:exodeoxyribonuclease VII activity"/>
    <property type="evidence" value="ECO:0007669"/>
    <property type="project" value="UniProtKB-UniRule"/>
</dbReference>
<dbReference type="GO" id="GO:0006308">
    <property type="term" value="P:DNA catabolic process"/>
    <property type="evidence" value="ECO:0007669"/>
    <property type="project" value="UniProtKB-UniRule"/>
</dbReference>
<dbReference type="Gene3D" id="1.10.287.1040">
    <property type="entry name" value="Exonuclease VII, small subunit"/>
    <property type="match status" value="1"/>
</dbReference>
<dbReference type="HAMAP" id="MF_00337">
    <property type="entry name" value="Exonuc_7_S"/>
    <property type="match status" value="1"/>
</dbReference>
<dbReference type="InterPro" id="IPR003761">
    <property type="entry name" value="Exonuc_VII_S"/>
</dbReference>
<dbReference type="InterPro" id="IPR037004">
    <property type="entry name" value="Exonuc_VII_ssu_sf"/>
</dbReference>
<dbReference type="NCBIfam" id="TIGR01280">
    <property type="entry name" value="xseB"/>
    <property type="match status" value="1"/>
</dbReference>
<dbReference type="PANTHER" id="PTHR34137">
    <property type="entry name" value="EXODEOXYRIBONUCLEASE 7 SMALL SUBUNIT"/>
    <property type="match status" value="1"/>
</dbReference>
<dbReference type="PANTHER" id="PTHR34137:SF1">
    <property type="entry name" value="EXODEOXYRIBONUCLEASE 7 SMALL SUBUNIT"/>
    <property type="match status" value="1"/>
</dbReference>
<dbReference type="Pfam" id="PF02609">
    <property type="entry name" value="Exonuc_VII_S"/>
    <property type="match status" value="1"/>
</dbReference>
<dbReference type="PIRSF" id="PIRSF006488">
    <property type="entry name" value="Exonuc_VII_S"/>
    <property type="match status" value="1"/>
</dbReference>
<dbReference type="SUPFAM" id="SSF116842">
    <property type="entry name" value="XseB-like"/>
    <property type="match status" value="1"/>
</dbReference>
<comment type="function">
    <text evidence="1">Bidirectionally degrades single-stranded DNA into large acid-insoluble oligonucleotides, which are then degraded further into small acid-soluble oligonucleotides.</text>
</comment>
<comment type="catalytic activity">
    <reaction evidence="1">
        <text>Exonucleolytic cleavage in either 5'- to 3'- or 3'- to 5'-direction to yield nucleoside 5'-phosphates.</text>
        <dbReference type="EC" id="3.1.11.6"/>
    </reaction>
</comment>
<comment type="subunit">
    <text evidence="1">Heterooligomer composed of large and small subunits.</text>
</comment>
<comment type="subcellular location">
    <subcellularLocation>
        <location evidence="1">Cytoplasm</location>
    </subcellularLocation>
</comment>
<comment type="similarity">
    <text evidence="1">Belongs to the XseB family.</text>
</comment>
<keyword id="KW-0963">Cytoplasm</keyword>
<keyword id="KW-0269">Exonuclease</keyword>
<keyword id="KW-0378">Hydrolase</keyword>
<keyword id="KW-0540">Nuclease</keyword>
<keyword id="KW-1185">Reference proteome</keyword>
<sequence length="78" mass="9121">MNKELSFEEGIEHLERIVRELEQKEVPLEQALNLFRQGIELVQKCNNQLDYAEKQMQILLENPNGELEVRPADFPVEG</sequence>
<proteinExistence type="inferred from homology"/>
<organism>
    <name type="scientific">Desulfitobacterium hafniense (strain Y51)</name>
    <dbReference type="NCBI Taxonomy" id="138119"/>
    <lineage>
        <taxon>Bacteria</taxon>
        <taxon>Bacillati</taxon>
        <taxon>Bacillota</taxon>
        <taxon>Clostridia</taxon>
        <taxon>Eubacteriales</taxon>
        <taxon>Desulfitobacteriaceae</taxon>
        <taxon>Desulfitobacterium</taxon>
    </lineage>
</organism>
<reference key="1">
    <citation type="journal article" date="2006" name="J. Bacteriol.">
        <title>Complete genome sequence of the dehalorespiring bacterium Desulfitobacterium hafniense Y51 and comparison with Dehalococcoides ethenogenes 195.</title>
        <authorList>
            <person name="Nonaka H."/>
            <person name="Keresztes G."/>
            <person name="Shinoda Y."/>
            <person name="Ikenaga Y."/>
            <person name="Abe M."/>
            <person name="Naito K."/>
            <person name="Inatomi K."/>
            <person name="Furukawa K."/>
            <person name="Inui M."/>
            <person name="Yukawa H."/>
        </authorList>
    </citation>
    <scope>NUCLEOTIDE SEQUENCE [LARGE SCALE GENOMIC DNA]</scope>
    <source>
        <strain>Y51</strain>
    </source>
</reference>
<feature type="chain" id="PRO_1000019579" description="Exodeoxyribonuclease 7 small subunit">
    <location>
        <begin position="1"/>
        <end position="78"/>
    </location>
</feature>
<evidence type="ECO:0000255" key="1">
    <source>
        <dbReference type="HAMAP-Rule" id="MF_00337"/>
    </source>
</evidence>
<gene>
    <name evidence="1" type="primary">xseB</name>
    <name type="ordered locus">DSY2352</name>
</gene>
<accession>Q24V01</accession>
<protein>
    <recommendedName>
        <fullName evidence="1">Exodeoxyribonuclease 7 small subunit</fullName>
        <ecNumber evidence="1">3.1.11.6</ecNumber>
    </recommendedName>
    <alternativeName>
        <fullName evidence="1">Exodeoxyribonuclease VII small subunit</fullName>
        <shortName evidence="1">Exonuclease VII small subunit</shortName>
    </alternativeName>
</protein>